<reference key="1">
    <citation type="journal article" date="1994" name="EMBO J.">
        <title>Complete DNA sequence of yeast chromosome II.</title>
        <authorList>
            <person name="Feldmann H."/>
            <person name="Aigle M."/>
            <person name="Aljinovic G."/>
            <person name="Andre B."/>
            <person name="Baclet M.C."/>
            <person name="Barthe C."/>
            <person name="Baur A."/>
            <person name="Becam A.-M."/>
            <person name="Biteau N."/>
            <person name="Boles E."/>
            <person name="Brandt T."/>
            <person name="Brendel M."/>
            <person name="Brueckner M."/>
            <person name="Bussereau F."/>
            <person name="Christiansen C."/>
            <person name="Contreras R."/>
            <person name="Crouzet M."/>
            <person name="Cziepluch C."/>
            <person name="Demolis N."/>
            <person name="Delaveau T."/>
            <person name="Doignon F."/>
            <person name="Domdey H."/>
            <person name="Duesterhus S."/>
            <person name="Dubois E."/>
            <person name="Dujon B."/>
            <person name="El Bakkoury M."/>
            <person name="Entian K.-D."/>
            <person name="Feuermann M."/>
            <person name="Fiers W."/>
            <person name="Fobo G.M."/>
            <person name="Fritz C."/>
            <person name="Gassenhuber J."/>
            <person name="Glansdorff N."/>
            <person name="Goffeau A."/>
            <person name="Grivell L.A."/>
            <person name="de Haan M."/>
            <person name="Hein C."/>
            <person name="Herbert C.J."/>
            <person name="Hollenberg C.P."/>
            <person name="Holmstroem K."/>
            <person name="Jacq C."/>
            <person name="Jacquet M."/>
            <person name="Jauniaux J.-C."/>
            <person name="Jonniaux J.-L."/>
            <person name="Kallesoee T."/>
            <person name="Kiesau P."/>
            <person name="Kirchrath L."/>
            <person name="Koetter P."/>
            <person name="Korol S."/>
            <person name="Liebl S."/>
            <person name="Logghe M."/>
            <person name="Lohan A.J.E."/>
            <person name="Louis E.J."/>
            <person name="Li Z.Y."/>
            <person name="Maat M.J."/>
            <person name="Mallet L."/>
            <person name="Mannhaupt G."/>
            <person name="Messenguy F."/>
            <person name="Miosga T."/>
            <person name="Molemans F."/>
            <person name="Mueller S."/>
            <person name="Nasr F."/>
            <person name="Obermaier B."/>
            <person name="Perea J."/>
            <person name="Pierard A."/>
            <person name="Piravandi E."/>
            <person name="Pohl F.M."/>
            <person name="Pohl T.M."/>
            <person name="Potier S."/>
            <person name="Proft M."/>
            <person name="Purnelle B."/>
            <person name="Ramezani Rad M."/>
            <person name="Rieger M."/>
            <person name="Rose M."/>
            <person name="Schaaff-Gerstenschlaeger I."/>
            <person name="Scherens B."/>
            <person name="Schwarzlose C."/>
            <person name="Skala J."/>
            <person name="Slonimski P.P."/>
            <person name="Smits P.H.M."/>
            <person name="Souciet J.-L."/>
            <person name="Steensma H.Y."/>
            <person name="Stucka R."/>
            <person name="Urrestarazu L.A."/>
            <person name="van der Aart Q.J.M."/>
            <person name="Van Dyck L."/>
            <person name="Vassarotti A."/>
            <person name="Vetter I."/>
            <person name="Vierendeels F."/>
            <person name="Vissers S."/>
            <person name="Wagner G."/>
            <person name="de Wergifosse P."/>
            <person name="Wolfe K.H."/>
            <person name="Zagulski M."/>
            <person name="Zimmermann F.K."/>
            <person name="Mewes H.-W."/>
            <person name="Kleine K."/>
        </authorList>
    </citation>
    <scope>NUCLEOTIDE SEQUENCE [LARGE SCALE GENOMIC DNA]</scope>
    <source>
        <strain>ATCC 204508 / S288c</strain>
    </source>
</reference>
<reference key="2">
    <citation type="journal article" date="2014" name="G3 (Bethesda)">
        <title>The reference genome sequence of Saccharomyces cerevisiae: Then and now.</title>
        <authorList>
            <person name="Engel S.R."/>
            <person name="Dietrich F.S."/>
            <person name="Fisk D.G."/>
            <person name="Binkley G."/>
            <person name="Balakrishnan R."/>
            <person name="Costanzo M.C."/>
            <person name="Dwight S.S."/>
            <person name="Hitz B.C."/>
            <person name="Karra K."/>
            <person name="Nash R.S."/>
            <person name="Weng S."/>
            <person name="Wong E.D."/>
            <person name="Lloyd P."/>
            <person name="Skrzypek M.S."/>
            <person name="Miyasato S.R."/>
            <person name="Simison M."/>
            <person name="Cherry J.M."/>
        </authorList>
    </citation>
    <scope>GENOME REANNOTATION</scope>
    <source>
        <strain>ATCC 204508 / S288c</strain>
    </source>
</reference>
<reference key="3">
    <citation type="journal article" date="1999" name="Mol. Gen. Genet.">
        <title>Functional analysis of 150 deletion mutants in Saccharomyces cerevisiae by a systematic approach.</title>
        <authorList>
            <person name="Entian K.-D."/>
            <person name="Schuster T."/>
            <person name="Hegemann J.H."/>
            <person name="Becher D."/>
            <person name="Feldmann H."/>
            <person name="Gueldener U."/>
            <person name="Goetz R."/>
            <person name="Hansen M."/>
            <person name="Hollenberg C.P."/>
            <person name="Jansen G."/>
            <person name="Kramer W."/>
            <person name="Klein S."/>
            <person name="Koetter P."/>
            <person name="Kricke J."/>
            <person name="Launhardt H."/>
            <person name="Mannhaupt G."/>
            <person name="Maierl A."/>
            <person name="Meyer P."/>
            <person name="Mewes W."/>
            <person name="Munder T."/>
            <person name="Niedenthal R.K."/>
            <person name="Ramezani Rad M."/>
            <person name="Roehmer A."/>
            <person name="Roemer A."/>
            <person name="Rose M."/>
            <person name="Schaefer B."/>
            <person name="Siegler M.-L."/>
            <person name="Vetter J."/>
            <person name="Wilhelm N."/>
            <person name="Wolf K."/>
            <person name="Zimmermann F.K."/>
            <person name="Zollner A."/>
            <person name="Hinnen A."/>
        </authorList>
    </citation>
    <scope>FUNCTION</scope>
</reference>
<reference key="4">
    <citation type="journal article" date="1988" name="J. Biol. Chem.">
        <title>Exonuclease V from Saccharomyces cerevisiae. A 5'-3'-deoxyribonuclease that produces dinucleotides in a sequential fashion.</title>
        <authorList>
            <person name="Burgers P.M."/>
            <person name="Bauer G.A."/>
            <person name="Tam L."/>
        </authorList>
    </citation>
    <scope>FUNCTION</scope>
    <scope>COFACTOR</scope>
    <scope>BIOPHYSICOCHEMICAL PROPERTIES</scope>
</reference>
<reference key="5">
    <citation type="journal article" date="2003" name="Nature">
        <title>Global analysis of protein localization in budding yeast.</title>
        <authorList>
            <person name="Huh W.-K."/>
            <person name="Falvo J.V."/>
            <person name="Gerke L.C."/>
            <person name="Carroll A.S."/>
            <person name="Howson R.W."/>
            <person name="Weissman J.S."/>
            <person name="O'Shea E.K."/>
        </authorList>
    </citation>
    <scope>SUBCELLULAR LOCATION [LARGE SCALE ANALYSIS]</scope>
</reference>
<reference key="6">
    <citation type="journal article" date="2003" name="Nature">
        <title>Global analysis of protein expression in yeast.</title>
        <authorList>
            <person name="Ghaemmaghami S."/>
            <person name="Huh W.-K."/>
            <person name="Bower K."/>
            <person name="Howson R.W."/>
            <person name="Belle A."/>
            <person name="Dephoure N."/>
            <person name="O'Shea E.K."/>
            <person name="Weissman J.S."/>
        </authorList>
    </citation>
    <scope>LEVEL OF PROTEIN EXPRESSION [LARGE SCALE ANALYSIS]</scope>
</reference>
<reference key="7">
    <citation type="journal article" date="2010" name="Mol. Cell. Biol.">
        <title>Yeast exonuclease 5 is essential for mitochondrial genome maintenance.</title>
        <authorList>
            <person name="Burgers P.M."/>
            <person name="Stith C.M."/>
            <person name="Yoder B.L."/>
            <person name="Sparks J.L."/>
        </authorList>
    </citation>
    <scope>FUNCTION</scope>
    <scope>SUBUNIT</scope>
    <scope>MUTAGENESIS OF ASP-270 AND ASP-320</scope>
</reference>
<accession>P38289</accession>
<accession>D6VQF9</accession>
<protein>
    <recommendedName>
        <fullName>Exonuclease V, mitochondrial</fullName>
        <shortName>Exo V</shortName>
        <ecNumber>3.1.-.-</ecNumber>
    </recommendedName>
    <alternativeName>
        <fullName>Defects in morphology protein 1</fullName>
    </alternativeName>
</protein>
<comment type="function">
    <text evidence="3 6 7">Single strand DNA specific 5' exonuclease involved in mitochondrial DNA replication and recombination. Releases dinucleotides as main products of catalysis. Has the capacity to slide across 5'double-stranded DNA or 5'RNA sequences and resumes cutting two nucleotides downstream of the double-stranded-to-single-stranded junction or RNA-to-DNA junction, respectively.</text>
</comment>
<comment type="cofactor">
    <cofactor evidence="7">
        <name>Mg(2+)</name>
        <dbReference type="ChEBI" id="CHEBI:18420"/>
    </cofactor>
</comment>
<comment type="cofactor">
    <cofactor evidence="1">
        <name>[4Fe-4S] cluster</name>
        <dbReference type="ChEBI" id="CHEBI:49883"/>
    </cofactor>
    <text evidence="1">Binds 1 [4Fe-4S] cluster.</text>
</comment>
<comment type="biophysicochemical properties">
    <phDependence>
        <text evidence="7">Optimum pH is 7.8.</text>
    </phDependence>
</comment>
<comment type="subunit">
    <text evidence="6">Monomer.</text>
</comment>
<comment type="subcellular location">
    <subcellularLocation>
        <location evidence="4">Mitochondrion</location>
    </subcellularLocation>
</comment>
<comment type="miscellaneous">
    <text evidence="5">Present with 1420 molecules/cell in log phase SD medium.</text>
</comment>
<comment type="similarity">
    <text evidence="8">Belongs to the EXO5 family.</text>
</comment>
<sequence length="585" mass="67570">MLGRALINKYGFLIHPRRFVHLNDKSLDGTFILPSKKNHMYDVPTNDPSGILNASDIDRINNLPFFDNTSPTKETNTKEGALLSEKLASVKELFGEDPENPSFINYRFPRGLENPYFDIQVNQLKKKRLSVTQLCTTQNWCELRNFYDFYSQNLSNQLLNLKFQVQKGKKIHKSLEDETHPELNQYKSFTHNFLALTKLSMDIDNDMDALLDNWFNSINRLVSLFTKGDGHAREIVCHGFINLEDGKLVEHLLNSDSKTKENVIISGVIDHLTLRNRHNHQVQKGAAHLDTEYQSWGNILTNLLSNLKELKSNNEIVISDIKTRSVPKIPSIESVIESSKLQTMYYKFFFSHLSQDMTQTYHSFLINAQRRGLDVDAPINPTKILTFILTNPLFANDVKNLLYGLPINHSAFDNDAKGSNTFDMTAFNDLLDRGPTSFNVPIEQDEDSSESTKCVSLRDYGHFYTKWKTPLTLKYFAARLSQIYFIVGNLVSNDLMIEYYYHNDNFHNIIFPYDPLKLGTHAHDSAMVWFGGRDMHPIEPTQKNFNTYCKFCDYRHVCSWKNKNELKLIDLGKELKKIILESSMK</sequence>
<keyword id="KW-0004">4Fe-4S</keyword>
<keyword id="KW-0238">DNA-binding</keyword>
<keyword id="KW-0269">Exonuclease</keyword>
<keyword id="KW-0378">Hydrolase</keyword>
<keyword id="KW-0408">Iron</keyword>
<keyword id="KW-0411">Iron-sulfur</keyword>
<keyword id="KW-0460">Magnesium</keyword>
<keyword id="KW-0479">Metal-binding</keyword>
<keyword id="KW-0496">Mitochondrion</keyword>
<keyword id="KW-0540">Nuclease</keyword>
<keyword id="KW-1185">Reference proteome</keyword>
<keyword id="KW-0809">Transit peptide</keyword>
<feature type="transit peptide" description="Mitochondrion" evidence="2">
    <location>
        <begin position="1"/>
        <end position="26"/>
    </location>
</feature>
<feature type="chain" id="PRO_0000202501" description="Exonuclease V, mitochondrial">
    <location>
        <begin position="27"/>
        <end position="585"/>
    </location>
</feature>
<feature type="binding site" evidence="1">
    <location>
        <position position="141"/>
    </location>
    <ligand>
        <name>[4Fe-4S] cluster</name>
        <dbReference type="ChEBI" id="CHEBI:49883"/>
    </ligand>
</feature>
<feature type="binding site" evidence="1">
    <location>
        <position position="270"/>
    </location>
    <ligand>
        <name>Mg(2+)</name>
        <dbReference type="ChEBI" id="CHEBI:18420"/>
    </ligand>
</feature>
<feature type="binding site" evidence="1">
    <location>
        <position position="320"/>
    </location>
    <ligand>
        <name>Mg(2+)</name>
        <dbReference type="ChEBI" id="CHEBI:18420"/>
    </ligand>
</feature>
<feature type="binding site" evidence="1">
    <location>
        <position position="549"/>
    </location>
    <ligand>
        <name>[4Fe-4S] cluster</name>
        <dbReference type="ChEBI" id="CHEBI:49883"/>
    </ligand>
</feature>
<feature type="binding site" evidence="1">
    <location>
        <position position="552"/>
    </location>
    <ligand>
        <name>[4Fe-4S] cluster</name>
        <dbReference type="ChEBI" id="CHEBI:49883"/>
    </ligand>
</feature>
<feature type="binding site" evidence="1">
    <location>
        <position position="558"/>
    </location>
    <ligand>
        <name>[4Fe-4S] cluster</name>
        <dbReference type="ChEBI" id="CHEBI:49883"/>
    </ligand>
</feature>
<feature type="mutagenesis site" description="Impairs exonuclease activity." evidence="6">
    <original>D</original>
    <variation>A</variation>
    <location>
        <position position="270"/>
    </location>
</feature>
<feature type="mutagenesis site" description="Impairs exonuclease activity." evidence="6">
    <original>D</original>
    <variation>A</variation>
    <location>
        <position position="320"/>
    </location>
</feature>
<dbReference type="EC" id="3.1.-.-"/>
<dbReference type="EMBL" id="Z36032">
    <property type="protein sequence ID" value="CAA85123.1"/>
    <property type="molecule type" value="Genomic_DNA"/>
</dbReference>
<dbReference type="EMBL" id="BK006936">
    <property type="protein sequence ID" value="DAA07279.1"/>
    <property type="molecule type" value="Genomic_DNA"/>
</dbReference>
<dbReference type="PIR" id="S46034">
    <property type="entry name" value="S46034"/>
</dbReference>
<dbReference type="RefSeq" id="NP_009722.3">
    <property type="nucleotide sequence ID" value="NM_001178511.3"/>
</dbReference>
<dbReference type="BioGRID" id="32863">
    <property type="interactions" value="36"/>
</dbReference>
<dbReference type="FunCoup" id="P38289">
    <property type="interactions" value="36"/>
</dbReference>
<dbReference type="IntAct" id="P38289">
    <property type="interactions" value="4"/>
</dbReference>
<dbReference type="MINT" id="P38289"/>
<dbReference type="STRING" id="4932.YBR163W"/>
<dbReference type="PaxDb" id="4932-YBR163W"/>
<dbReference type="PeptideAtlas" id="P38289"/>
<dbReference type="EnsemblFungi" id="YBR163W_mRNA">
    <property type="protein sequence ID" value="YBR163W"/>
    <property type="gene ID" value="YBR163W"/>
</dbReference>
<dbReference type="GeneID" id="852461"/>
<dbReference type="KEGG" id="sce:YBR163W"/>
<dbReference type="AGR" id="SGD:S000000367"/>
<dbReference type="SGD" id="S000000367">
    <property type="gene designation" value="EXO5"/>
</dbReference>
<dbReference type="VEuPathDB" id="FungiDB:YBR163W"/>
<dbReference type="eggNOG" id="ENOG502QR0P">
    <property type="taxonomic scope" value="Eukaryota"/>
</dbReference>
<dbReference type="GeneTree" id="ENSGT00390000015205"/>
<dbReference type="HOGENOM" id="CLU_019985_0_0_1"/>
<dbReference type="InParanoid" id="P38289"/>
<dbReference type="OMA" id="LQVMYYR"/>
<dbReference type="OrthoDB" id="354769at2759"/>
<dbReference type="BioCyc" id="YEAST:G3O-29113-MONOMER"/>
<dbReference type="BioGRID-ORCS" id="852461">
    <property type="hits" value="0 hits in 10 CRISPR screens"/>
</dbReference>
<dbReference type="PRO" id="PR:P38289"/>
<dbReference type="Proteomes" id="UP000002311">
    <property type="component" value="Chromosome II"/>
</dbReference>
<dbReference type="RNAct" id="P38289">
    <property type="molecule type" value="protein"/>
</dbReference>
<dbReference type="GO" id="GO:0005739">
    <property type="term" value="C:mitochondrion"/>
    <property type="evidence" value="ECO:0007005"/>
    <property type="project" value="SGD"/>
</dbReference>
<dbReference type="GO" id="GO:0005634">
    <property type="term" value="C:nucleus"/>
    <property type="evidence" value="ECO:0000318"/>
    <property type="project" value="GO_Central"/>
</dbReference>
<dbReference type="GO" id="GO:0051539">
    <property type="term" value="F:4 iron, 4 sulfur cluster binding"/>
    <property type="evidence" value="ECO:0007669"/>
    <property type="project" value="UniProtKB-KW"/>
</dbReference>
<dbReference type="GO" id="GO:0003677">
    <property type="term" value="F:DNA binding"/>
    <property type="evidence" value="ECO:0007669"/>
    <property type="project" value="UniProtKB-KW"/>
</dbReference>
<dbReference type="GO" id="GO:0046872">
    <property type="term" value="F:metal ion binding"/>
    <property type="evidence" value="ECO:0007669"/>
    <property type="project" value="UniProtKB-KW"/>
</dbReference>
<dbReference type="GO" id="GO:0045145">
    <property type="term" value="F:single-stranded DNA 5'-3' DNA exonuclease activity"/>
    <property type="evidence" value="ECO:0000314"/>
    <property type="project" value="SGD"/>
</dbReference>
<dbReference type="GO" id="GO:0036297">
    <property type="term" value="P:interstrand cross-link repair"/>
    <property type="evidence" value="ECO:0000318"/>
    <property type="project" value="GO_Central"/>
</dbReference>
<dbReference type="GO" id="GO:0000002">
    <property type="term" value="P:mitochondrial genome maintenance"/>
    <property type="evidence" value="ECO:0000315"/>
    <property type="project" value="SGD"/>
</dbReference>
<dbReference type="InterPro" id="IPR016610">
    <property type="entry name" value="Exo5"/>
</dbReference>
<dbReference type="InterPro" id="IPR019190">
    <property type="entry name" value="EXOV"/>
</dbReference>
<dbReference type="PANTHER" id="PTHR14464">
    <property type="entry name" value="EXONUCLEASE V"/>
    <property type="match status" value="1"/>
</dbReference>
<dbReference type="PANTHER" id="PTHR14464:SF4">
    <property type="entry name" value="EXONUCLEASE V"/>
    <property type="match status" value="1"/>
</dbReference>
<dbReference type="Pfam" id="PF09810">
    <property type="entry name" value="Exo5"/>
    <property type="match status" value="1"/>
</dbReference>
<dbReference type="PIRSF" id="PIRSF013220">
    <property type="entry name" value="UCP013220"/>
    <property type="match status" value="1"/>
</dbReference>
<name>EXO5_YEAST</name>
<organism>
    <name type="scientific">Saccharomyces cerevisiae (strain ATCC 204508 / S288c)</name>
    <name type="common">Baker's yeast</name>
    <dbReference type="NCBI Taxonomy" id="559292"/>
    <lineage>
        <taxon>Eukaryota</taxon>
        <taxon>Fungi</taxon>
        <taxon>Dikarya</taxon>
        <taxon>Ascomycota</taxon>
        <taxon>Saccharomycotina</taxon>
        <taxon>Saccharomycetes</taxon>
        <taxon>Saccharomycetales</taxon>
        <taxon>Saccharomycetaceae</taxon>
        <taxon>Saccharomyces</taxon>
    </lineage>
</organism>
<proteinExistence type="evidence at protein level"/>
<gene>
    <name type="primary">EXO5</name>
    <name type="synonym">DEM1</name>
    <name type="ordered locus">YBR163W</name>
    <name type="ORF">YBR1215</name>
</gene>
<evidence type="ECO:0000250" key="1">
    <source>
        <dbReference type="UniProtKB" id="Q9H790"/>
    </source>
</evidence>
<evidence type="ECO:0000255" key="2"/>
<evidence type="ECO:0000269" key="3">
    <source>
    </source>
</evidence>
<evidence type="ECO:0000269" key="4">
    <source>
    </source>
</evidence>
<evidence type="ECO:0000269" key="5">
    <source>
    </source>
</evidence>
<evidence type="ECO:0000269" key="6">
    <source>
    </source>
</evidence>
<evidence type="ECO:0000269" key="7">
    <source>
    </source>
</evidence>
<evidence type="ECO:0000305" key="8"/>